<feature type="chain" id="PRO_1000139815" description="Formamidase">
    <location>
        <begin position="1"/>
        <end position="334"/>
    </location>
</feature>
<feature type="domain" description="CN hydrolase" evidence="2">
    <location>
        <begin position="14"/>
        <end position="260"/>
    </location>
</feature>
<feature type="active site" description="Proton acceptor" evidence="1">
    <location>
        <position position="60"/>
    </location>
</feature>
<feature type="active site" description="Proton donor" evidence="1">
    <location>
        <position position="133"/>
    </location>
</feature>
<feature type="active site" description="Nucleophile" evidence="1">
    <location>
        <position position="166"/>
    </location>
</feature>
<keyword id="KW-0378">Hydrolase</keyword>
<comment type="function">
    <text evidence="1">Is an aliphatic amidase with a restricted substrate specificity, as it only hydrolyzes formamide.</text>
</comment>
<comment type="catalytic activity">
    <reaction evidence="1">
        <text>formamide + H2O = formate + NH4(+)</text>
        <dbReference type="Rhea" id="RHEA:21948"/>
        <dbReference type="ChEBI" id="CHEBI:15377"/>
        <dbReference type="ChEBI" id="CHEBI:15740"/>
        <dbReference type="ChEBI" id="CHEBI:16397"/>
        <dbReference type="ChEBI" id="CHEBI:28938"/>
        <dbReference type="EC" id="3.5.1.49"/>
    </reaction>
</comment>
<comment type="similarity">
    <text evidence="1">Belongs to the carbon-nitrogen hydrolase superfamily. Aliphatic amidase family.</text>
</comment>
<dbReference type="EC" id="3.5.1.49" evidence="1"/>
<dbReference type="EMBL" id="CP001072">
    <property type="protein sequence ID" value="ACD48683.1"/>
    <property type="molecule type" value="Genomic_DNA"/>
</dbReference>
<dbReference type="RefSeq" id="WP_000534777.1">
    <property type="nucleotide sequence ID" value="NC_010698.2"/>
</dbReference>
<dbReference type="SMR" id="B2UV01"/>
<dbReference type="KEGG" id="hps:HPSH_06405"/>
<dbReference type="HOGENOM" id="CLU_071797_0_0_7"/>
<dbReference type="GO" id="GO:0004328">
    <property type="term" value="F:formamidase activity"/>
    <property type="evidence" value="ECO:0007669"/>
    <property type="project" value="UniProtKB-UniRule"/>
</dbReference>
<dbReference type="GO" id="GO:0050126">
    <property type="term" value="F:N-carbamoylputrescine amidase activity"/>
    <property type="evidence" value="ECO:0007669"/>
    <property type="project" value="TreeGrafter"/>
</dbReference>
<dbReference type="GO" id="GO:0033388">
    <property type="term" value="P:putrescine biosynthetic process from arginine"/>
    <property type="evidence" value="ECO:0007669"/>
    <property type="project" value="TreeGrafter"/>
</dbReference>
<dbReference type="CDD" id="cd07565">
    <property type="entry name" value="aliphatic_amidase"/>
    <property type="match status" value="1"/>
</dbReference>
<dbReference type="Gene3D" id="3.60.110.10">
    <property type="entry name" value="Carbon-nitrogen hydrolase"/>
    <property type="match status" value="1"/>
</dbReference>
<dbReference type="HAMAP" id="MF_01243">
    <property type="entry name" value="Formamidase"/>
    <property type="match status" value="1"/>
</dbReference>
<dbReference type="InterPro" id="IPR050345">
    <property type="entry name" value="Aliph_Amidase/BUP"/>
</dbReference>
<dbReference type="InterPro" id="IPR003010">
    <property type="entry name" value="C-N_Hydrolase"/>
</dbReference>
<dbReference type="InterPro" id="IPR036526">
    <property type="entry name" value="C-N_Hydrolase_sf"/>
</dbReference>
<dbReference type="InterPro" id="IPR022843">
    <property type="entry name" value="Formamidase"/>
</dbReference>
<dbReference type="NCBIfam" id="NF009803">
    <property type="entry name" value="PRK13287.1"/>
    <property type="match status" value="1"/>
</dbReference>
<dbReference type="PANTHER" id="PTHR43674:SF15">
    <property type="entry name" value="FORMAMIDASE"/>
    <property type="match status" value="1"/>
</dbReference>
<dbReference type="PANTHER" id="PTHR43674">
    <property type="entry name" value="NITRILASE C965.09-RELATED"/>
    <property type="match status" value="1"/>
</dbReference>
<dbReference type="Pfam" id="PF00795">
    <property type="entry name" value="CN_hydrolase"/>
    <property type="match status" value="1"/>
</dbReference>
<dbReference type="SUPFAM" id="SSF56317">
    <property type="entry name" value="Carbon-nitrogen hydrolase"/>
    <property type="match status" value="1"/>
</dbReference>
<dbReference type="PROSITE" id="PS50263">
    <property type="entry name" value="CN_HYDROLASE"/>
    <property type="match status" value="1"/>
</dbReference>
<protein>
    <recommendedName>
        <fullName evidence="1">Formamidase</fullName>
        <ecNumber evidence="1">3.5.1.49</ecNumber>
    </recommendedName>
    <alternativeName>
        <fullName evidence="1">Formamide amidohydrolase</fullName>
    </alternativeName>
</protein>
<proteinExistence type="inferred from homology"/>
<evidence type="ECO:0000255" key="1">
    <source>
        <dbReference type="HAMAP-Rule" id="MF_01243"/>
    </source>
</evidence>
<evidence type="ECO:0000255" key="2">
    <source>
        <dbReference type="PROSITE-ProRule" id="PRU00054"/>
    </source>
</evidence>
<accession>B2UV01</accession>
<organism>
    <name type="scientific">Helicobacter pylori (strain Shi470)</name>
    <dbReference type="NCBI Taxonomy" id="512562"/>
    <lineage>
        <taxon>Bacteria</taxon>
        <taxon>Pseudomonadati</taxon>
        <taxon>Campylobacterota</taxon>
        <taxon>Epsilonproteobacteria</taxon>
        <taxon>Campylobacterales</taxon>
        <taxon>Helicobacteraceae</taxon>
        <taxon>Helicobacter</taxon>
    </lineage>
</organism>
<name>AMIF_HELPS</name>
<reference key="1">
    <citation type="submission" date="2008-05" db="EMBL/GenBank/DDBJ databases">
        <title>Genome sequence of Helicobacter pylori from the remote Amazon: traces of Asian ancestry of the first Americans.</title>
        <authorList>
            <person name="Kersulyte D."/>
            <person name="Kalia A."/>
            <person name="Gilman R.H."/>
            <person name="Berg D.E."/>
        </authorList>
    </citation>
    <scope>NUCLEOTIDE SEQUENCE [LARGE SCALE GENOMIC DNA]</scope>
    <source>
        <strain>Shi470</strain>
    </source>
</reference>
<sequence length="334" mass="37276">MGSIGSMGKPIEGFLVAAIQFPVPIVNSRKDIDHNIESIIRTLHATKAGYPGVELIIFPEYSTQGLNTAKWLSEEFLLDVPGKETELYAKACKEAKVYGVFSIMERNPDSNKNPYNTAIIIDPQGKIILKYRKLFPWNPIEPWYPGDLGMPVCEGPGGSKLAVCICHDGMIPELAREAAYKGCNVYIRISGYSTQVNDQWILTNRSNAWHNLMYTVSVNLAGYDNVFYYFGEGQICNFDGTTLVQGHRNPWEIVTGEIYPKMADNARLSWGLENNIYNLGHRGYVAKPGGEHDAGLTYIKDLAAGKYKLPWEDHMKIKDGSVYGYPTTGGRFGK</sequence>
<gene>
    <name evidence="1" type="primary">amiF</name>
    <name type="ordered locus">HPSH_06405</name>
</gene>